<organism>
    <name type="scientific">Borreliella burgdorferi (strain ATCC 35210 / DSM 4680 / CIP 102532 / B31)</name>
    <name type="common">Borrelia burgdorferi</name>
    <dbReference type="NCBI Taxonomy" id="224326"/>
    <lineage>
        <taxon>Bacteria</taxon>
        <taxon>Pseudomonadati</taxon>
        <taxon>Spirochaetota</taxon>
        <taxon>Spirochaetia</taxon>
        <taxon>Spirochaetales</taxon>
        <taxon>Borreliaceae</taxon>
        <taxon>Borreliella</taxon>
    </lineage>
</organism>
<accession>O51280</accession>
<evidence type="ECO:0000255" key="1"/>
<evidence type="ECO:0000305" key="2"/>
<dbReference type="EMBL" id="AE000783">
    <property type="protein sequence ID" value="AAC66690.1"/>
    <property type="molecule type" value="Genomic_DNA"/>
</dbReference>
<dbReference type="PIR" id="A70133">
    <property type="entry name" value="A70133"/>
</dbReference>
<dbReference type="RefSeq" id="NP_212399.1">
    <property type="nucleotide sequence ID" value="NC_001318.1"/>
</dbReference>
<dbReference type="RefSeq" id="WP_002556864.1">
    <property type="nucleotide sequence ID" value="NC_001318.1"/>
</dbReference>
<dbReference type="SMR" id="O51280"/>
<dbReference type="STRING" id="224326.BB_0265"/>
<dbReference type="PaxDb" id="224326-BB_0265"/>
<dbReference type="EnsemblBacteria" id="AAC66690">
    <property type="protein sequence ID" value="AAC66690"/>
    <property type="gene ID" value="BB_0265"/>
</dbReference>
<dbReference type="KEGG" id="bbu:BB_0265"/>
<dbReference type="PATRIC" id="fig|224326.49.peg.664"/>
<dbReference type="HOGENOM" id="CLU_1544667_0_0_12"/>
<dbReference type="OrthoDB" id="350518at2"/>
<dbReference type="Proteomes" id="UP000001807">
    <property type="component" value="Chromosome"/>
</dbReference>
<dbReference type="GO" id="GO:0016020">
    <property type="term" value="C:membrane"/>
    <property type="evidence" value="ECO:0007669"/>
    <property type="project" value="UniProtKB-SubCell"/>
</dbReference>
<dbReference type="InterPro" id="IPR046118">
    <property type="entry name" value="DUF6115"/>
</dbReference>
<dbReference type="Pfam" id="PF19610">
    <property type="entry name" value="DUF6115"/>
    <property type="match status" value="1"/>
</dbReference>
<feature type="chain" id="PRO_0000174387" description="Uncharacterized protein BB_0265">
    <location>
        <begin position="1"/>
        <end position="173"/>
    </location>
</feature>
<feature type="transmembrane region" description="Helical" evidence="1">
    <location>
        <begin position="1"/>
        <end position="21"/>
    </location>
</feature>
<comment type="subcellular location">
    <subcellularLocation>
        <location evidence="2">Membrane</location>
        <topology evidence="2">Single-pass membrane protein</topology>
    </subcellularLocation>
</comment>
<comment type="similarity">
    <text evidence="2">To T.pallidum TP0711.</text>
</comment>
<sequence>MFIVFYLILIIFIFIYFHVYINLKIKSNSILRKFKSEVDKTIIEINQATDRNINIIEIKIESLNRIIKEVDERIEILDQRLLGFNNSSIPGNSPSSFGSKSDGIYKSNLDYSMPTIEKNIIKESYNVRNQIILLHEQGMSFEAIAKKFKLDLGEVELIISIHRGGVHEKMDRY</sequence>
<keyword id="KW-0472">Membrane</keyword>
<keyword id="KW-1185">Reference proteome</keyword>
<keyword id="KW-0812">Transmembrane</keyword>
<keyword id="KW-1133">Transmembrane helix</keyword>
<gene>
    <name type="ordered locus">BB_0265</name>
</gene>
<reference key="1">
    <citation type="journal article" date="1997" name="Nature">
        <title>Genomic sequence of a Lyme disease spirochaete, Borrelia burgdorferi.</title>
        <authorList>
            <person name="Fraser C.M."/>
            <person name="Casjens S."/>
            <person name="Huang W.M."/>
            <person name="Sutton G.G."/>
            <person name="Clayton R.A."/>
            <person name="Lathigra R."/>
            <person name="White O."/>
            <person name="Ketchum K.A."/>
            <person name="Dodson R.J."/>
            <person name="Hickey E.K."/>
            <person name="Gwinn M.L."/>
            <person name="Dougherty B.A."/>
            <person name="Tomb J.-F."/>
            <person name="Fleischmann R.D."/>
            <person name="Richardson D.L."/>
            <person name="Peterson J.D."/>
            <person name="Kerlavage A.R."/>
            <person name="Quackenbush J."/>
            <person name="Salzberg S.L."/>
            <person name="Hanson M."/>
            <person name="van Vugt R."/>
            <person name="Palmer N."/>
            <person name="Adams M.D."/>
            <person name="Gocayne J.D."/>
            <person name="Weidman J.F."/>
            <person name="Utterback T.R."/>
            <person name="Watthey L."/>
            <person name="McDonald L.A."/>
            <person name="Artiach P."/>
            <person name="Bowman C."/>
            <person name="Garland S.A."/>
            <person name="Fujii C."/>
            <person name="Cotton M.D."/>
            <person name="Horst K."/>
            <person name="Roberts K.M."/>
            <person name="Hatch B."/>
            <person name="Smith H.O."/>
            <person name="Venter J.C."/>
        </authorList>
    </citation>
    <scope>NUCLEOTIDE SEQUENCE [LARGE SCALE GENOMIC DNA]</scope>
    <source>
        <strain>ATCC 35210 / DSM 4680 / CIP 102532 / B31</strain>
    </source>
</reference>
<protein>
    <recommendedName>
        <fullName>Uncharacterized protein BB_0265</fullName>
    </recommendedName>
</protein>
<name>Y265_BORBU</name>
<proteinExistence type="predicted"/>